<keyword id="KW-0324">Glycolysis</keyword>
<keyword id="KW-0413">Isomerase</keyword>
<keyword id="KW-0464">Manganese</keyword>
<keyword id="KW-0479">Metal-binding</keyword>
<sequence>MSATPKPLVLIILDGFGHSDKPEYNAIHAASTPVYDRLRATYPHGLISGSGMDVGLPDGQMGNSEVGHMNLGAGRVVYQDFTRVTKAIRDGEFFDNAAINQAVDKAVAAGKAVHILGLLSDGGVHSHQDHIVAMAELAARRGAEKIYLHAFLDGRDTPPKSAQPSIELLDAAFARLGKGRIASLTGRYFAMDRDNRWDRVEQAYHLIVDGAGQFNAASAVEGLQAAYERGESDEFVKATTIGAPVQVEDGDAVVFMNFRADRARELTRAFVEPGFQEFERKRAPQVGFVMLTQYAASIPAPAAFAPEALTNVLGEYLAKNGKTQLRIAETEKYAHVTFFFSGGREEPFEGEERILIPSPDVATYDLKPEMSAPEVTDRIVDAIENQRYDVIIVNYANGDMVGHTGVFEAAVKAVETLDTCVGRITEALQKVGGEALITADHGNVEQMEDECTGQAHTAHTCEPVPFIYVGKRPARIREGGVLADVAPTLLTLMGLPQPAEMTGKTIVELE</sequence>
<dbReference type="EC" id="5.4.2.12" evidence="1"/>
<dbReference type="EMBL" id="CP000680">
    <property type="protein sequence ID" value="ABP86993.1"/>
    <property type="molecule type" value="Genomic_DNA"/>
</dbReference>
<dbReference type="SMR" id="A4Y077"/>
<dbReference type="STRING" id="399739.Pmen_4246"/>
<dbReference type="KEGG" id="pmy:Pmen_4246"/>
<dbReference type="PATRIC" id="fig|399739.8.peg.4300"/>
<dbReference type="eggNOG" id="COG0696">
    <property type="taxonomic scope" value="Bacteria"/>
</dbReference>
<dbReference type="HOGENOM" id="CLU_026099_2_0_6"/>
<dbReference type="OrthoDB" id="9800863at2"/>
<dbReference type="UniPathway" id="UPA00109">
    <property type="reaction ID" value="UER00186"/>
</dbReference>
<dbReference type="GO" id="GO:0005829">
    <property type="term" value="C:cytosol"/>
    <property type="evidence" value="ECO:0007669"/>
    <property type="project" value="TreeGrafter"/>
</dbReference>
<dbReference type="GO" id="GO:0030145">
    <property type="term" value="F:manganese ion binding"/>
    <property type="evidence" value="ECO:0007669"/>
    <property type="project" value="UniProtKB-UniRule"/>
</dbReference>
<dbReference type="GO" id="GO:0004619">
    <property type="term" value="F:phosphoglycerate mutase activity"/>
    <property type="evidence" value="ECO:0007669"/>
    <property type="project" value="UniProtKB-EC"/>
</dbReference>
<dbReference type="GO" id="GO:0006007">
    <property type="term" value="P:glucose catabolic process"/>
    <property type="evidence" value="ECO:0007669"/>
    <property type="project" value="InterPro"/>
</dbReference>
<dbReference type="GO" id="GO:0006096">
    <property type="term" value="P:glycolytic process"/>
    <property type="evidence" value="ECO:0007669"/>
    <property type="project" value="UniProtKB-UniRule"/>
</dbReference>
<dbReference type="CDD" id="cd16010">
    <property type="entry name" value="iPGM"/>
    <property type="match status" value="1"/>
</dbReference>
<dbReference type="FunFam" id="3.40.1450.10:FF:000001">
    <property type="entry name" value="2,3-bisphosphoglycerate-independent phosphoglycerate mutase"/>
    <property type="match status" value="1"/>
</dbReference>
<dbReference type="FunFam" id="3.40.720.10:FF:000001">
    <property type="entry name" value="2,3-bisphosphoglycerate-independent phosphoglycerate mutase"/>
    <property type="match status" value="1"/>
</dbReference>
<dbReference type="Gene3D" id="3.40.720.10">
    <property type="entry name" value="Alkaline Phosphatase, subunit A"/>
    <property type="match status" value="1"/>
</dbReference>
<dbReference type="Gene3D" id="3.40.1450.10">
    <property type="entry name" value="BPG-independent phosphoglycerate mutase, domain B"/>
    <property type="match status" value="1"/>
</dbReference>
<dbReference type="HAMAP" id="MF_01038">
    <property type="entry name" value="GpmI"/>
    <property type="match status" value="1"/>
</dbReference>
<dbReference type="InterPro" id="IPR017850">
    <property type="entry name" value="Alkaline_phosphatase_core_sf"/>
</dbReference>
<dbReference type="InterPro" id="IPR011258">
    <property type="entry name" value="BPG-indep_PGM_N"/>
</dbReference>
<dbReference type="InterPro" id="IPR006124">
    <property type="entry name" value="Metalloenzyme"/>
</dbReference>
<dbReference type="InterPro" id="IPR036646">
    <property type="entry name" value="PGAM_B_sf"/>
</dbReference>
<dbReference type="InterPro" id="IPR005995">
    <property type="entry name" value="Pgm_bpd_ind"/>
</dbReference>
<dbReference type="NCBIfam" id="TIGR01307">
    <property type="entry name" value="pgm_bpd_ind"/>
    <property type="match status" value="1"/>
</dbReference>
<dbReference type="PANTHER" id="PTHR31637">
    <property type="entry name" value="2,3-BISPHOSPHOGLYCERATE-INDEPENDENT PHOSPHOGLYCERATE MUTASE"/>
    <property type="match status" value="1"/>
</dbReference>
<dbReference type="PANTHER" id="PTHR31637:SF0">
    <property type="entry name" value="2,3-BISPHOSPHOGLYCERATE-INDEPENDENT PHOSPHOGLYCERATE MUTASE"/>
    <property type="match status" value="1"/>
</dbReference>
<dbReference type="Pfam" id="PF06415">
    <property type="entry name" value="iPGM_N"/>
    <property type="match status" value="1"/>
</dbReference>
<dbReference type="Pfam" id="PF01676">
    <property type="entry name" value="Metalloenzyme"/>
    <property type="match status" value="1"/>
</dbReference>
<dbReference type="PIRSF" id="PIRSF001492">
    <property type="entry name" value="IPGAM"/>
    <property type="match status" value="1"/>
</dbReference>
<dbReference type="SUPFAM" id="SSF64158">
    <property type="entry name" value="2,3-Bisphosphoglycerate-independent phosphoglycerate mutase, substrate-binding domain"/>
    <property type="match status" value="1"/>
</dbReference>
<dbReference type="SUPFAM" id="SSF53649">
    <property type="entry name" value="Alkaline phosphatase-like"/>
    <property type="match status" value="1"/>
</dbReference>
<comment type="function">
    <text evidence="1">Catalyzes the interconversion of 2-phosphoglycerate and 3-phosphoglycerate.</text>
</comment>
<comment type="catalytic activity">
    <reaction evidence="1">
        <text>(2R)-2-phosphoglycerate = (2R)-3-phosphoglycerate</text>
        <dbReference type="Rhea" id="RHEA:15901"/>
        <dbReference type="ChEBI" id="CHEBI:58272"/>
        <dbReference type="ChEBI" id="CHEBI:58289"/>
        <dbReference type="EC" id="5.4.2.12"/>
    </reaction>
</comment>
<comment type="cofactor">
    <cofactor evidence="1">
        <name>Mn(2+)</name>
        <dbReference type="ChEBI" id="CHEBI:29035"/>
    </cofactor>
    <text evidence="1">Binds 2 manganese ions per subunit.</text>
</comment>
<comment type="pathway">
    <text evidence="1">Carbohydrate degradation; glycolysis; pyruvate from D-glyceraldehyde 3-phosphate: step 3/5.</text>
</comment>
<comment type="subunit">
    <text evidence="1">Monomer.</text>
</comment>
<comment type="similarity">
    <text evidence="1">Belongs to the BPG-independent phosphoglycerate mutase family.</text>
</comment>
<feature type="chain" id="PRO_1000063990" description="2,3-bisphosphoglycerate-independent phosphoglycerate mutase">
    <location>
        <begin position="1"/>
        <end position="510"/>
    </location>
</feature>
<feature type="active site" description="Phosphoserine intermediate" evidence="1">
    <location>
        <position position="64"/>
    </location>
</feature>
<feature type="binding site" evidence="1">
    <location>
        <position position="14"/>
    </location>
    <ligand>
        <name>Mn(2+)</name>
        <dbReference type="ChEBI" id="CHEBI:29035"/>
        <label>2</label>
    </ligand>
</feature>
<feature type="binding site" evidence="1">
    <location>
        <position position="64"/>
    </location>
    <ligand>
        <name>Mn(2+)</name>
        <dbReference type="ChEBI" id="CHEBI:29035"/>
        <label>2</label>
    </ligand>
</feature>
<feature type="binding site" evidence="1">
    <location>
        <position position="125"/>
    </location>
    <ligand>
        <name>substrate</name>
    </ligand>
</feature>
<feature type="binding site" evidence="1">
    <location>
        <begin position="155"/>
        <end position="156"/>
    </location>
    <ligand>
        <name>substrate</name>
    </ligand>
</feature>
<feature type="binding site" evidence="1">
    <location>
        <position position="187"/>
    </location>
    <ligand>
        <name>substrate</name>
    </ligand>
</feature>
<feature type="binding site" evidence="1">
    <location>
        <position position="193"/>
    </location>
    <ligand>
        <name>substrate</name>
    </ligand>
</feature>
<feature type="binding site" evidence="1">
    <location>
        <begin position="259"/>
        <end position="262"/>
    </location>
    <ligand>
        <name>substrate</name>
    </ligand>
</feature>
<feature type="binding site" evidence="1">
    <location>
        <position position="332"/>
    </location>
    <ligand>
        <name>substrate</name>
    </ligand>
</feature>
<feature type="binding site" evidence="1">
    <location>
        <position position="399"/>
    </location>
    <ligand>
        <name>Mn(2+)</name>
        <dbReference type="ChEBI" id="CHEBI:29035"/>
        <label>1</label>
    </ligand>
</feature>
<feature type="binding site" evidence="1">
    <location>
        <position position="403"/>
    </location>
    <ligand>
        <name>Mn(2+)</name>
        <dbReference type="ChEBI" id="CHEBI:29035"/>
        <label>1</label>
    </ligand>
</feature>
<feature type="binding site" evidence="1">
    <location>
        <position position="440"/>
    </location>
    <ligand>
        <name>Mn(2+)</name>
        <dbReference type="ChEBI" id="CHEBI:29035"/>
        <label>2</label>
    </ligand>
</feature>
<feature type="binding site" evidence="1">
    <location>
        <position position="441"/>
    </location>
    <ligand>
        <name>Mn(2+)</name>
        <dbReference type="ChEBI" id="CHEBI:29035"/>
        <label>2</label>
    </ligand>
</feature>
<feature type="binding site" evidence="1">
    <location>
        <position position="459"/>
    </location>
    <ligand>
        <name>Mn(2+)</name>
        <dbReference type="ChEBI" id="CHEBI:29035"/>
        <label>1</label>
    </ligand>
</feature>
<proteinExistence type="inferred from homology"/>
<reference key="1">
    <citation type="submission" date="2007-04" db="EMBL/GenBank/DDBJ databases">
        <title>Complete sequence of Pseudomonas mendocina ymp.</title>
        <authorList>
            <consortium name="US DOE Joint Genome Institute"/>
            <person name="Copeland A."/>
            <person name="Lucas S."/>
            <person name="Lapidus A."/>
            <person name="Barry K."/>
            <person name="Glavina del Rio T."/>
            <person name="Dalin E."/>
            <person name="Tice H."/>
            <person name="Pitluck S."/>
            <person name="Kiss H."/>
            <person name="Brettin T."/>
            <person name="Detter J.C."/>
            <person name="Bruce D."/>
            <person name="Han C."/>
            <person name="Schmutz J."/>
            <person name="Larimer F."/>
            <person name="Land M."/>
            <person name="Hauser L."/>
            <person name="Kyrpides N."/>
            <person name="Mikhailova N."/>
            <person name="Hersman L."/>
            <person name="Dubois J."/>
            <person name="Maurice P."/>
            <person name="Richardson P."/>
        </authorList>
    </citation>
    <scope>NUCLEOTIDE SEQUENCE [LARGE SCALE GENOMIC DNA]</scope>
    <source>
        <strain>ymp</strain>
    </source>
</reference>
<protein>
    <recommendedName>
        <fullName evidence="1">2,3-bisphosphoglycerate-independent phosphoglycerate mutase</fullName>
        <shortName evidence="1">BPG-independent PGAM</shortName>
        <shortName evidence="1">Phosphoglyceromutase</shortName>
        <shortName evidence="1">iPGM</shortName>
        <ecNumber evidence="1">5.4.2.12</ecNumber>
    </recommendedName>
</protein>
<evidence type="ECO:0000255" key="1">
    <source>
        <dbReference type="HAMAP-Rule" id="MF_01038"/>
    </source>
</evidence>
<organism>
    <name type="scientific">Ectopseudomonas mendocina (strain ymp)</name>
    <name type="common">Pseudomonas mendocina</name>
    <dbReference type="NCBI Taxonomy" id="399739"/>
    <lineage>
        <taxon>Bacteria</taxon>
        <taxon>Pseudomonadati</taxon>
        <taxon>Pseudomonadota</taxon>
        <taxon>Gammaproteobacteria</taxon>
        <taxon>Pseudomonadales</taxon>
        <taxon>Pseudomonadaceae</taxon>
        <taxon>Ectopseudomonas</taxon>
    </lineage>
</organism>
<accession>A4Y077</accession>
<name>GPMI_ECTM1</name>
<gene>
    <name evidence="1" type="primary">gpmI</name>
    <name type="ordered locus">Pmen_4246</name>
</gene>